<dbReference type="EC" id="1.1.1.94" evidence="1"/>
<dbReference type="EMBL" id="CP000687">
    <property type="protein sequence ID" value="ABY70088.1"/>
    <property type="molecule type" value="Genomic_DNA"/>
</dbReference>
<dbReference type="RefSeq" id="WP_012263265.1">
    <property type="nucleotide sequence ID" value="NC_010278.1"/>
</dbReference>
<dbReference type="SMR" id="B0BRA3"/>
<dbReference type="KEGG" id="apj:APJL_1536"/>
<dbReference type="HOGENOM" id="CLU_033449_0_2_6"/>
<dbReference type="UniPathway" id="UPA00940"/>
<dbReference type="Proteomes" id="UP000008547">
    <property type="component" value="Chromosome"/>
</dbReference>
<dbReference type="GO" id="GO:0005829">
    <property type="term" value="C:cytosol"/>
    <property type="evidence" value="ECO:0007669"/>
    <property type="project" value="TreeGrafter"/>
</dbReference>
<dbReference type="GO" id="GO:0047952">
    <property type="term" value="F:glycerol-3-phosphate dehydrogenase [NAD(P)+] activity"/>
    <property type="evidence" value="ECO:0007669"/>
    <property type="project" value="UniProtKB-UniRule"/>
</dbReference>
<dbReference type="GO" id="GO:0051287">
    <property type="term" value="F:NAD binding"/>
    <property type="evidence" value="ECO:0007669"/>
    <property type="project" value="InterPro"/>
</dbReference>
<dbReference type="GO" id="GO:0005975">
    <property type="term" value="P:carbohydrate metabolic process"/>
    <property type="evidence" value="ECO:0007669"/>
    <property type="project" value="InterPro"/>
</dbReference>
<dbReference type="GO" id="GO:0046167">
    <property type="term" value="P:glycerol-3-phosphate biosynthetic process"/>
    <property type="evidence" value="ECO:0007669"/>
    <property type="project" value="UniProtKB-UniRule"/>
</dbReference>
<dbReference type="GO" id="GO:0046168">
    <property type="term" value="P:glycerol-3-phosphate catabolic process"/>
    <property type="evidence" value="ECO:0007669"/>
    <property type="project" value="InterPro"/>
</dbReference>
<dbReference type="GO" id="GO:0046474">
    <property type="term" value="P:glycerophospholipid biosynthetic process"/>
    <property type="evidence" value="ECO:0007669"/>
    <property type="project" value="TreeGrafter"/>
</dbReference>
<dbReference type="FunFam" id="1.10.1040.10:FF:000001">
    <property type="entry name" value="Glycerol-3-phosphate dehydrogenase [NAD(P)+]"/>
    <property type="match status" value="1"/>
</dbReference>
<dbReference type="FunFam" id="3.40.50.720:FF:000019">
    <property type="entry name" value="Glycerol-3-phosphate dehydrogenase [NAD(P)+]"/>
    <property type="match status" value="1"/>
</dbReference>
<dbReference type="Gene3D" id="1.10.1040.10">
    <property type="entry name" value="N-(1-d-carboxylethyl)-l-norvaline Dehydrogenase, domain 2"/>
    <property type="match status" value="1"/>
</dbReference>
<dbReference type="Gene3D" id="3.40.50.720">
    <property type="entry name" value="NAD(P)-binding Rossmann-like Domain"/>
    <property type="match status" value="1"/>
</dbReference>
<dbReference type="HAMAP" id="MF_00394">
    <property type="entry name" value="NAD_Glyc3P_dehydrog"/>
    <property type="match status" value="1"/>
</dbReference>
<dbReference type="InterPro" id="IPR008927">
    <property type="entry name" value="6-PGluconate_DH-like_C_sf"/>
</dbReference>
<dbReference type="InterPro" id="IPR013328">
    <property type="entry name" value="6PGD_dom2"/>
</dbReference>
<dbReference type="InterPro" id="IPR006168">
    <property type="entry name" value="G3P_DH_NAD-dep"/>
</dbReference>
<dbReference type="InterPro" id="IPR006109">
    <property type="entry name" value="G3P_DH_NAD-dep_C"/>
</dbReference>
<dbReference type="InterPro" id="IPR011128">
    <property type="entry name" value="G3P_DH_NAD-dep_N"/>
</dbReference>
<dbReference type="InterPro" id="IPR036291">
    <property type="entry name" value="NAD(P)-bd_dom_sf"/>
</dbReference>
<dbReference type="NCBIfam" id="NF000939">
    <property type="entry name" value="PRK00094.1-1"/>
    <property type="match status" value="1"/>
</dbReference>
<dbReference type="NCBIfam" id="NF000940">
    <property type="entry name" value="PRK00094.1-2"/>
    <property type="match status" value="1"/>
</dbReference>
<dbReference type="NCBIfam" id="NF000942">
    <property type="entry name" value="PRK00094.1-4"/>
    <property type="match status" value="1"/>
</dbReference>
<dbReference type="PANTHER" id="PTHR11728">
    <property type="entry name" value="GLYCEROL-3-PHOSPHATE DEHYDROGENASE"/>
    <property type="match status" value="1"/>
</dbReference>
<dbReference type="PANTHER" id="PTHR11728:SF1">
    <property type="entry name" value="GLYCEROL-3-PHOSPHATE DEHYDROGENASE [NAD(+)] 2, CHLOROPLASTIC"/>
    <property type="match status" value="1"/>
</dbReference>
<dbReference type="Pfam" id="PF07479">
    <property type="entry name" value="NAD_Gly3P_dh_C"/>
    <property type="match status" value="1"/>
</dbReference>
<dbReference type="Pfam" id="PF01210">
    <property type="entry name" value="NAD_Gly3P_dh_N"/>
    <property type="match status" value="1"/>
</dbReference>
<dbReference type="PIRSF" id="PIRSF000114">
    <property type="entry name" value="Glycerol-3-P_dh"/>
    <property type="match status" value="1"/>
</dbReference>
<dbReference type="PRINTS" id="PR00077">
    <property type="entry name" value="GPDHDRGNASE"/>
</dbReference>
<dbReference type="SUPFAM" id="SSF48179">
    <property type="entry name" value="6-phosphogluconate dehydrogenase C-terminal domain-like"/>
    <property type="match status" value="1"/>
</dbReference>
<dbReference type="SUPFAM" id="SSF51735">
    <property type="entry name" value="NAD(P)-binding Rossmann-fold domains"/>
    <property type="match status" value="1"/>
</dbReference>
<dbReference type="PROSITE" id="PS00957">
    <property type="entry name" value="NAD_G3PDH"/>
    <property type="match status" value="1"/>
</dbReference>
<evidence type="ECO:0000255" key="1">
    <source>
        <dbReference type="HAMAP-Rule" id="MF_00394"/>
    </source>
</evidence>
<name>GPDA_ACTPJ</name>
<feature type="chain" id="PRO_1000123114" description="Glycerol-3-phosphate dehydrogenase [NAD(P)+]">
    <location>
        <begin position="1"/>
        <end position="336"/>
    </location>
</feature>
<feature type="active site" description="Proton acceptor" evidence="1">
    <location>
        <position position="196"/>
    </location>
</feature>
<feature type="binding site" evidence="1">
    <location>
        <position position="16"/>
    </location>
    <ligand>
        <name>NADPH</name>
        <dbReference type="ChEBI" id="CHEBI:57783"/>
    </ligand>
</feature>
<feature type="binding site" evidence="1">
    <location>
        <position position="17"/>
    </location>
    <ligand>
        <name>NADPH</name>
        <dbReference type="ChEBI" id="CHEBI:57783"/>
    </ligand>
</feature>
<feature type="binding site" evidence="1">
    <location>
        <position position="37"/>
    </location>
    <ligand>
        <name>NADPH</name>
        <dbReference type="ChEBI" id="CHEBI:57783"/>
    </ligand>
</feature>
<feature type="binding site" evidence="1">
    <location>
        <position position="111"/>
    </location>
    <ligand>
        <name>NADPH</name>
        <dbReference type="ChEBI" id="CHEBI:57783"/>
    </ligand>
</feature>
<feature type="binding site" evidence="1">
    <location>
        <position position="111"/>
    </location>
    <ligand>
        <name>sn-glycerol 3-phosphate</name>
        <dbReference type="ChEBI" id="CHEBI:57597"/>
    </ligand>
</feature>
<feature type="binding site" evidence="1">
    <location>
        <position position="140"/>
    </location>
    <ligand>
        <name>sn-glycerol 3-phosphate</name>
        <dbReference type="ChEBI" id="CHEBI:57597"/>
    </ligand>
</feature>
<feature type="binding site" evidence="1">
    <location>
        <position position="142"/>
    </location>
    <ligand>
        <name>sn-glycerol 3-phosphate</name>
        <dbReference type="ChEBI" id="CHEBI:57597"/>
    </ligand>
</feature>
<feature type="binding site" evidence="1">
    <location>
        <position position="144"/>
    </location>
    <ligand>
        <name>NADPH</name>
        <dbReference type="ChEBI" id="CHEBI:57783"/>
    </ligand>
</feature>
<feature type="binding site" evidence="1">
    <location>
        <position position="196"/>
    </location>
    <ligand>
        <name>sn-glycerol 3-phosphate</name>
        <dbReference type="ChEBI" id="CHEBI:57597"/>
    </ligand>
</feature>
<feature type="binding site" evidence="1">
    <location>
        <position position="249"/>
    </location>
    <ligand>
        <name>sn-glycerol 3-phosphate</name>
        <dbReference type="ChEBI" id="CHEBI:57597"/>
    </ligand>
</feature>
<feature type="binding site" evidence="1">
    <location>
        <position position="259"/>
    </location>
    <ligand>
        <name>sn-glycerol 3-phosphate</name>
        <dbReference type="ChEBI" id="CHEBI:57597"/>
    </ligand>
</feature>
<feature type="binding site" evidence="1">
    <location>
        <position position="260"/>
    </location>
    <ligand>
        <name>NADPH</name>
        <dbReference type="ChEBI" id="CHEBI:57783"/>
    </ligand>
</feature>
<feature type="binding site" evidence="1">
    <location>
        <position position="260"/>
    </location>
    <ligand>
        <name>sn-glycerol 3-phosphate</name>
        <dbReference type="ChEBI" id="CHEBI:57597"/>
    </ligand>
</feature>
<feature type="binding site" evidence="1">
    <location>
        <position position="261"/>
    </location>
    <ligand>
        <name>sn-glycerol 3-phosphate</name>
        <dbReference type="ChEBI" id="CHEBI:57597"/>
    </ligand>
</feature>
<feature type="binding site" evidence="1">
    <location>
        <position position="284"/>
    </location>
    <ligand>
        <name>NADPH</name>
        <dbReference type="ChEBI" id="CHEBI:57783"/>
    </ligand>
</feature>
<feature type="binding site" evidence="1">
    <location>
        <position position="286"/>
    </location>
    <ligand>
        <name>NADPH</name>
        <dbReference type="ChEBI" id="CHEBI:57783"/>
    </ligand>
</feature>
<gene>
    <name evidence="1" type="primary">gpsA</name>
    <name type="ordered locus">APJL_1536</name>
</gene>
<sequence length="336" mass="36140">MSEMYSAPVTVLGAGSYGTALAIALARNGHKTYLWGHQPEKMAVLATERMNNAFLPDIAFPDALEIESDLVQAIAKVRDILIVVPSHVFADVLTQIKPLLNAHHRIMWATKGLERNTGRLLQTVAQEILGNQYPLAVLSGPTFAKELAQGLPTAIALSSTDSQFADEMQQRIHCSKAFRVYLNNDMIGVQLGGAIKNVIAIGAGISDGMGFGANARTALITRGLAEISRLGASLGANSNTFMGMAGLGDLVLTCTDNQSRNRRFGLMLGQGKSAEEAMAEIGQVVEGFYNTKEAYLLAQTQGVEMPIVEQIYQMLFCGKNAHDVATSLLGRERKGE</sequence>
<proteinExistence type="inferred from homology"/>
<accession>B0BRA3</accession>
<keyword id="KW-0963">Cytoplasm</keyword>
<keyword id="KW-0444">Lipid biosynthesis</keyword>
<keyword id="KW-0443">Lipid metabolism</keyword>
<keyword id="KW-0520">NAD</keyword>
<keyword id="KW-0521">NADP</keyword>
<keyword id="KW-0547">Nucleotide-binding</keyword>
<keyword id="KW-0560">Oxidoreductase</keyword>
<keyword id="KW-0594">Phospholipid biosynthesis</keyword>
<keyword id="KW-1208">Phospholipid metabolism</keyword>
<organism>
    <name type="scientific">Actinobacillus pleuropneumoniae serotype 3 (strain JL03)</name>
    <dbReference type="NCBI Taxonomy" id="434271"/>
    <lineage>
        <taxon>Bacteria</taxon>
        <taxon>Pseudomonadati</taxon>
        <taxon>Pseudomonadota</taxon>
        <taxon>Gammaproteobacteria</taxon>
        <taxon>Pasteurellales</taxon>
        <taxon>Pasteurellaceae</taxon>
        <taxon>Actinobacillus</taxon>
    </lineage>
</organism>
<reference key="1">
    <citation type="journal article" date="2008" name="PLoS ONE">
        <title>Genome biology of Actinobacillus pleuropneumoniae JL03, an isolate of serotype 3 prevalent in China.</title>
        <authorList>
            <person name="Xu Z."/>
            <person name="Zhou Y."/>
            <person name="Li L."/>
            <person name="Zhou R."/>
            <person name="Xiao S."/>
            <person name="Wan Y."/>
            <person name="Zhang S."/>
            <person name="Wang K."/>
            <person name="Li W."/>
            <person name="Li L."/>
            <person name="Jin H."/>
            <person name="Kang M."/>
            <person name="Dalai B."/>
            <person name="Li T."/>
            <person name="Liu L."/>
            <person name="Cheng Y."/>
            <person name="Zhang L."/>
            <person name="Xu T."/>
            <person name="Zheng H."/>
            <person name="Pu S."/>
            <person name="Wang B."/>
            <person name="Gu W."/>
            <person name="Zhang X.L."/>
            <person name="Zhu G.-F."/>
            <person name="Wang S."/>
            <person name="Zhao G.-P."/>
            <person name="Chen H."/>
        </authorList>
    </citation>
    <scope>NUCLEOTIDE SEQUENCE [LARGE SCALE GENOMIC DNA]</scope>
    <source>
        <strain>JL03</strain>
    </source>
</reference>
<protein>
    <recommendedName>
        <fullName evidence="1">Glycerol-3-phosphate dehydrogenase [NAD(P)+]</fullName>
        <ecNumber evidence="1">1.1.1.94</ecNumber>
    </recommendedName>
    <alternativeName>
        <fullName evidence="1">NAD(P)(+)-dependent glycerol-3-phosphate dehydrogenase</fullName>
    </alternativeName>
    <alternativeName>
        <fullName evidence="1">NAD(P)H-dependent dihydroxyacetone-phosphate reductase</fullName>
    </alternativeName>
</protein>
<comment type="function">
    <text evidence="1">Catalyzes the reduction of the glycolytic intermediate dihydroxyacetone phosphate (DHAP) to sn-glycerol 3-phosphate (G3P), the key precursor for phospholipid synthesis.</text>
</comment>
<comment type="catalytic activity">
    <reaction evidence="1">
        <text>sn-glycerol 3-phosphate + NAD(+) = dihydroxyacetone phosphate + NADH + H(+)</text>
        <dbReference type="Rhea" id="RHEA:11092"/>
        <dbReference type="ChEBI" id="CHEBI:15378"/>
        <dbReference type="ChEBI" id="CHEBI:57540"/>
        <dbReference type="ChEBI" id="CHEBI:57597"/>
        <dbReference type="ChEBI" id="CHEBI:57642"/>
        <dbReference type="ChEBI" id="CHEBI:57945"/>
        <dbReference type="EC" id="1.1.1.94"/>
    </reaction>
    <physiologicalReaction direction="right-to-left" evidence="1">
        <dbReference type="Rhea" id="RHEA:11094"/>
    </physiologicalReaction>
</comment>
<comment type="catalytic activity">
    <reaction evidence="1">
        <text>sn-glycerol 3-phosphate + NADP(+) = dihydroxyacetone phosphate + NADPH + H(+)</text>
        <dbReference type="Rhea" id="RHEA:11096"/>
        <dbReference type="ChEBI" id="CHEBI:15378"/>
        <dbReference type="ChEBI" id="CHEBI:57597"/>
        <dbReference type="ChEBI" id="CHEBI:57642"/>
        <dbReference type="ChEBI" id="CHEBI:57783"/>
        <dbReference type="ChEBI" id="CHEBI:58349"/>
        <dbReference type="EC" id="1.1.1.94"/>
    </reaction>
    <physiologicalReaction direction="right-to-left" evidence="1">
        <dbReference type="Rhea" id="RHEA:11098"/>
    </physiologicalReaction>
</comment>
<comment type="pathway">
    <text evidence="1">Membrane lipid metabolism; glycerophospholipid metabolism.</text>
</comment>
<comment type="subcellular location">
    <subcellularLocation>
        <location evidence="1">Cytoplasm</location>
    </subcellularLocation>
</comment>
<comment type="similarity">
    <text evidence="1">Belongs to the NAD-dependent glycerol-3-phosphate dehydrogenase family.</text>
</comment>